<sequence>MVDVNRFKSMQITLASPSKVRSWSYGEVKKPETINYRTLKPEREGLFDEVIFGPTKDWECACGKYKRIRYRGIVCDRCGVEVTRTKVRRERMGHIELKAPVSHIWYFKGIPSRMGLTLDMSPRALEEVIYFAAYVVIDPKDTPLEHKSIMTEREYRERLREYGYGSFVAKMGAEAIQDLLKQVDLEKEIAELKEELKTATGQKRVKAIRRLDVLDAFYKSGNKPEWMILNILPVIPPDLRPMLQLDGGRFASSDLNDLYRRVINRNNRLARLLELNAPGIIVQNEKRMLQEAVDALIDNGRRGRPITGPGSRPLKSLSHMLKGKQGRFRQNLLGKRVDFSGRSVIAVGPTLKMYQCGVPREMAIELFKPFVMREIVARDIVQNVKAAKRLVERGDERIWDILEEVIKEHPVLLNRAPTLHRLGIQAFEPVLIDGKALRLHPLVCEAYNADFDGDQMAIHVPLSEEAQAEARILMLAAEHILNPKDGKPVVTPSQDMVLGNYYLTMEEAGREGEGMVFKDRDEAVMAYRNGYVHLHSRVGIATDSLNKPWTEEQRHKVLLTTVGKILFNDIMPEGLPYLQEPNNANLTEGVPAKYFLPLGGAIKEAISNLELNPPFKKKNLGNIIAEIFKRFRTTETSALLDRMKNLGYHHSTLAGLTVGIADIPVVDDKAEIIEESHKRVEQITKQFRRGMITDDERYNAVTAEWRAAREKLEKRLIANQDPKNPIVMMMDSGARGNISNFSQLAGMRGLMAAPNGRIMELPILSNFREGLSVLEMFFSTHGARKGMTDTALKTADSGYLTRRLVDVAQDVIIREDDCGTDRGLLIRSIAEGKEMIESLEERLNGRYTKKTVKHPETGAVIIGPNELITEDKAREIVNAGVEEVTIRSVFTCNTRHGVCRHCYGINLATGDAVEVGEAVGTIAAQSIGEPGTQLTMRTFHTGGVASNTDITQGLPRVQEIFEARNPKGEAVITEVKGQVTAIEEDASTRTKKVFVKGETGEGEYVVPFTARMRVEVGGQVARGAALTEGSIQPKRLLAVRDVLSVETYLLGEVQKVYRSQGVEIGDKHIEVMVRQMIRKVRVMDPGDTDLLMGTLMDINDFTDANKDVLIAGGVPATGRPVLMGITKASLETNSFLSAASFQETTRVLTDAAIRGKKDHLLGLKENVIIGKIIPAGTGMARYRNLEPHAVNEEEYLNPPVEEEGNEETTEVVVDTAVETVEETVE</sequence>
<keyword id="KW-0240">DNA-directed RNA polymerase</keyword>
<keyword id="KW-0460">Magnesium</keyword>
<keyword id="KW-0479">Metal-binding</keyword>
<keyword id="KW-0548">Nucleotidyltransferase</keyword>
<keyword id="KW-1185">Reference proteome</keyword>
<keyword id="KW-0804">Transcription</keyword>
<keyword id="KW-0808">Transferase</keyword>
<keyword id="KW-0862">Zinc</keyword>
<feature type="chain" id="PRO_0000308883" description="DNA-directed RNA polymerase subunit beta'">
    <location>
        <begin position="1"/>
        <end position="1225"/>
    </location>
</feature>
<feature type="binding site" evidence="1">
    <location>
        <position position="60"/>
    </location>
    <ligand>
        <name>Zn(2+)</name>
        <dbReference type="ChEBI" id="CHEBI:29105"/>
        <label>1</label>
    </ligand>
</feature>
<feature type="binding site" evidence="1">
    <location>
        <position position="62"/>
    </location>
    <ligand>
        <name>Zn(2+)</name>
        <dbReference type="ChEBI" id="CHEBI:29105"/>
        <label>1</label>
    </ligand>
</feature>
<feature type="binding site" evidence="1">
    <location>
        <position position="75"/>
    </location>
    <ligand>
        <name>Zn(2+)</name>
        <dbReference type="ChEBI" id="CHEBI:29105"/>
        <label>1</label>
    </ligand>
</feature>
<feature type="binding site" evidence="1">
    <location>
        <position position="78"/>
    </location>
    <ligand>
        <name>Zn(2+)</name>
        <dbReference type="ChEBI" id="CHEBI:29105"/>
        <label>1</label>
    </ligand>
</feature>
<feature type="binding site" evidence="1">
    <location>
        <position position="450"/>
    </location>
    <ligand>
        <name>Mg(2+)</name>
        <dbReference type="ChEBI" id="CHEBI:18420"/>
    </ligand>
</feature>
<feature type="binding site" evidence="1">
    <location>
        <position position="452"/>
    </location>
    <ligand>
        <name>Mg(2+)</name>
        <dbReference type="ChEBI" id="CHEBI:18420"/>
    </ligand>
</feature>
<feature type="binding site" evidence="1">
    <location>
        <position position="454"/>
    </location>
    <ligand>
        <name>Mg(2+)</name>
        <dbReference type="ChEBI" id="CHEBI:18420"/>
    </ligand>
</feature>
<feature type="binding site" evidence="1">
    <location>
        <position position="818"/>
    </location>
    <ligand>
        <name>Zn(2+)</name>
        <dbReference type="ChEBI" id="CHEBI:29105"/>
        <label>2</label>
    </ligand>
</feature>
<feature type="binding site" evidence="1">
    <location>
        <position position="892"/>
    </location>
    <ligand>
        <name>Zn(2+)</name>
        <dbReference type="ChEBI" id="CHEBI:29105"/>
        <label>2</label>
    </ligand>
</feature>
<feature type="binding site" evidence="1">
    <location>
        <position position="899"/>
    </location>
    <ligand>
        <name>Zn(2+)</name>
        <dbReference type="ChEBI" id="CHEBI:29105"/>
        <label>2</label>
    </ligand>
</feature>
<feature type="binding site" evidence="1">
    <location>
        <position position="902"/>
    </location>
    <ligand>
        <name>Zn(2+)</name>
        <dbReference type="ChEBI" id="CHEBI:29105"/>
        <label>2</label>
    </ligand>
</feature>
<dbReference type="EC" id="2.7.7.6" evidence="1"/>
<dbReference type="EMBL" id="CP000410">
    <property type="protein sequence ID" value="ABJ54020.1"/>
    <property type="molecule type" value="Genomic_DNA"/>
</dbReference>
<dbReference type="RefSeq" id="WP_000228756.1">
    <property type="nucleotide sequence ID" value="NZ_JAMLJR010000010.1"/>
</dbReference>
<dbReference type="SMR" id="Q04IK7"/>
<dbReference type="PaxDb" id="373153-SPD_1758"/>
<dbReference type="KEGG" id="spd:SPD_1758"/>
<dbReference type="eggNOG" id="COG0086">
    <property type="taxonomic scope" value="Bacteria"/>
</dbReference>
<dbReference type="HOGENOM" id="CLU_000524_3_1_9"/>
<dbReference type="Proteomes" id="UP000001452">
    <property type="component" value="Chromosome"/>
</dbReference>
<dbReference type="GO" id="GO:0000428">
    <property type="term" value="C:DNA-directed RNA polymerase complex"/>
    <property type="evidence" value="ECO:0007669"/>
    <property type="project" value="UniProtKB-KW"/>
</dbReference>
<dbReference type="GO" id="GO:0003677">
    <property type="term" value="F:DNA binding"/>
    <property type="evidence" value="ECO:0007669"/>
    <property type="project" value="UniProtKB-UniRule"/>
</dbReference>
<dbReference type="GO" id="GO:0003899">
    <property type="term" value="F:DNA-directed RNA polymerase activity"/>
    <property type="evidence" value="ECO:0007669"/>
    <property type="project" value="UniProtKB-UniRule"/>
</dbReference>
<dbReference type="GO" id="GO:0000287">
    <property type="term" value="F:magnesium ion binding"/>
    <property type="evidence" value="ECO:0007669"/>
    <property type="project" value="UniProtKB-UniRule"/>
</dbReference>
<dbReference type="GO" id="GO:0008270">
    <property type="term" value="F:zinc ion binding"/>
    <property type="evidence" value="ECO:0007669"/>
    <property type="project" value="UniProtKB-UniRule"/>
</dbReference>
<dbReference type="GO" id="GO:0006351">
    <property type="term" value="P:DNA-templated transcription"/>
    <property type="evidence" value="ECO:0007669"/>
    <property type="project" value="UniProtKB-UniRule"/>
</dbReference>
<dbReference type="CDD" id="cd02655">
    <property type="entry name" value="RNAP_beta'_C"/>
    <property type="match status" value="1"/>
</dbReference>
<dbReference type="CDD" id="cd01609">
    <property type="entry name" value="RNAP_beta'_N"/>
    <property type="match status" value="1"/>
</dbReference>
<dbReference type="FunFam" id="1.10.150.390:FF:000002">
    <property type="entry name" value="DNA-directed RNA polymerase subunit beta"/>
    <property type="match status" value="1"/>
</dbReference>
<dbReference type="FunFam" id="4.10.860.120:FF:000001">
    <property type="entry name" value="DNA-directed RNA polymerase subunit beta"/>
    <property type="match status" value="1"/>
</dbReference>
<dbReference type="Gene3D" id="1.10.132.30">
    <property type="match status" value="1"/>
</dbReference>
<dbReference type="Gene3D" id="1.10.150.390">
    <property type="match status" value="1"/>
</dbReference>
<dbReference type="Gene3D" id="1.10.1790.20">
    <property type="match status" value="1"/>
</dbReference>
<dbReference type="Gene3D" id="1.10.40.90">
    <property type="match status" value="1"/>
</dbReference>
<dbReference type="Gene3D" id="2.40.40.20">
    <property type="match status" value="1"/>
</dbReference>
<dbReference type="Gene3D" id="2.40.50.100">
    <property type="match status" value="1"/>
</dbReference>
<dbReference type="Gene3D" id="4.10.860.120">
    <property type="entry name" value="RNA polymerase II, clamp domain"/>
    <property type="match status" value="1"/>
</dbReference>
<dbReference type="Gene3D" id="1.10.274.100">
    <property type="entry name" value="RNA polymerase Rpb1, domain 3"/>
    <property type="match status" value="1"/>
</dbReference>
<dbReference type="HAMAP" id="MF_01322">
    <property type="entry name" value="RNApol_bact_RpoC"/>
    <property type="match status" value="1"/>
</dbReference>
<dbReference type="InterPro" id="IPR045867">
    <property type="entry name" value="DNA-dir_RpoC_beta_prime"/>
</dbReference>
<dbReference type="InterPro" id="IPR012754">
    <property type="entry name" value="DNA-dir_RpoC_beta_prime_bact"/>
</dbReference>
<dbReference type="InterPro" id="IPR000722">
    <property type="entry name" value="RNA_pol_asu"/>
</dbReference>
<dbReference type="InterPro" id="IPR006592">
    <property type="entry name" value="RNA_pol_N"/>
</dbReference>
<dbReference type="InterPro" id="IPR007080">
    <property type="entry name" value="RNA_pol_Rpb1_1"/>
</dbReference>
<dbReference type="InterPro" id="IPR007066">
    <property type="entry name" value="RNA_pol_Rpb1_3"/>
</dbReference>
<dbReference type="InterPro" id="IPR042102">
    <property type="entry name" value="RNA_pol_Rpb1_3_sf"/>
</dbReference>
<dbReference type="InterPro" id="IPR007083">
    <property type="entry name" value="RNA_pol_Rpb1_4"/>
</dbReference>
<dbReference type="InterPro" id="IPR007081">
    <property type="entry name" value="RNA_pol_Rpb1_5"/>
</dbReference>
<dbReference type="InterPro" id="IPR044893">
    <property type="entry name" value="RNA_pol_Rpb1_clamp_domain"/>
</dbReference>
<dbReference type="InterPro" id="IPR038120">
    <property type="entry name" value="Rpb1_funnel_sf"/>
</dbReference>
<dbReference type="NCBIfam" id="TIGR02386">
    <property type="entry name" value="rpoC_TIGR"/>
    <property type="match status" value="1"/>
</dbReference>
<dbReference type="PANTHER" id="PTHR19376">
    <property type="entry name" value="DNA-DIRECTED RNA POLYMERASE"/>
    <property type="match status" value="1"/>
</dbReference>
<dbReference type="PANTHER" id="PTHR19376:SF54">
    <property type="entry name" value="DNA-DIRECTED RNA POLYMERASE SUBUNIT BETA"/>
    <property type="match status" value="1"/>
</dbReference>
<dbReference type="Pfam" id="PF04997">
    <property type="entry name" value="RNA_pol_Rpb1_1"/>
    <property type="match status" value="1"/>
</dbReference>
<dbReference type="Pfam" id="PF00623">
    <property type="entry name" value="RNA_pol_Rpb1_2"/>
    <property type="match status" value="2"/>
</dbReference>
<dbReference type="Pfam" id="PF04983">
    <property type="entry name" value="RNA_pol_Rpb1_3"/>
    <property type="match status" value="1"/>
</dbReference>
<dbReference type="Pfam" id="PF05000">
    <property type="entry name" value="RNA_pol_Rpb1_4"/>
    <property type="match status" value="1"/>
</dbReference>
<dbReference type="Pfam" id="PF04998">
    <property type="entry name" value="RNA_pol_Rpb1_5"/>
    <property type="match status" value="1"/>
</dbReference>
<dbReference type="SMART" id="SM00663">
    <property type="entry name" value="RPOLA_N"/>
    <property type="match status" value="1"/>
</dbReference>
<dbReference type="SUPFAM" id="SSF64484">
    <property type="entry name" value="beta and beta-prime subunits of DNA dependent RNA-polymerase"/>
    <property type="match status" value="1"/>
</dbReference>
<organism>
    <name type="scientific">Streptococcus pneumoniae serotype 2 (strain D39 / NCTC 7466)</name>
    <dbReference type="NCBI Taxonomy" id="373153"/>
    <lineage>
        <taxon>Bacteria</taxon>
        <taxon>Bacillati</taxon>
        <taxon>Bacillota</taxon>
        <taxon>Bacilli</taxon>
        <taxon>Lactobacillales</taxon>
        <taxon>Streptococcaceae</taxon>
        <taxon>Streptococcus</taxon>
    </lineage>
</organism>
<proteinExistence type="inferred from homology"/>
<reference key="1">
    <citation type="journal article" date="2007" name="J. Bacteriol.">
        <title>Genome sequence of Avery's virulent serotype 2 strain D39 of Streptococcus pneumoniae and comparison with that of unencapsulated laboratory strain R6.</title>
        <authorList>
            <person name="Lanie J.A."/>
            <person name="Ng W.-L."/>
            <person name="Kazmierczak K.M."/>
            <person name="Andrzejewski T.M."/>
            <person name="Davidsen T.M."/>
            <person name="Wayne K.J."/>
            <person name="Tettelin H."/>
            <person name="Glass J.I."/>
            <person name="Winkler M.E."/>
        </authorList>
    </citation>
    <scope>NUCLEOTIDE SEQUENCE [LARGE SCALE GENOMIC DNA]</scope>
    <source>
        <strain>D39 / NCTC 7466</strain>
    </source>
</reference>
<name>RPOC_STRP2</name>
<evidence type="ECO:0000255" key="1">
    <source>
        <dbReference type="HAMAP-Rule" id="MF_01322"/>
    </source>
</evidence>
<accession>Q04IK7</accession>
<comment type="function">
    <text evidence="1">DNA-dependent RNA polymerase catalyzes the transcription of DNA into RNA using the four ribonucleoside triphosphates as substrates.</text>
</comment>
<comment type="catalytic activity">
    <reaction evidence="1">
        <text>RNA(n) + a ribonucleoside 5'-triphosphate = RNA(n+1) + diphosphate</text>
        <dbReference type="Rhea" id="RHEA:21248"/>
        <dbReference type="Rhea" id="RHEA-COMP:14527"/>
        <dbReference type="Rhea" id="RHEA-COMP:17342"/>
        <dbReference type="ChEBI" id="CHEBI:33019"/>
        <dbReference type="ChEBI" id="CHEBI:61557"/>
        <dbReference type="ChEBI" id="CHEBI:140395"/>
        <dbReference type="EC" id="2.7.7.6"/>
    </reaction>
</comment>
<comment type="cofactor">
    <cofactor evidence="1">
        <name>Mg(2+)</name>
        <dbReference type="ChEBI" id="CHEBI:18420"/>
    </cofactor>
    <text evidence="1">Binds 1 Mg(2+) ion per subunit.</text>
</comment>
<comment type="cofactor">
    <cofactor evidence="1">
        <name>Zn(2+)</name>
        <dbReference type="ChEBI" id="CHEBI:29105"/>
    </cofactor>
    <text evidence="1">Binds 2 Zn(2+) ions per subunit.</text>
</comment>
<comment type="subunit">
    <text evidence="1">The RNAP catalytic core consists of 2 alpha, 1 beta, 1 beta' and 1 omega subunit. When a sigma factor is associated with the core the holoenzyme is formed, which can initiate transcription.</text>
</comment>
<comment type="similarity">
    <text evidence="1">Belongs to the RNA polymerase beta' chain family.</text>
</comment>
<gene>
    <name evidence="1" type="primary">rpoC</name>
    <name type="ordered locus">SPD_1758</name>
</gene>
<protein>
    <recommendedName>
        <fullName evidence="1">DNA-directed RNA polymerase subunit beta'</fullName>
        <shortName evidence="1">RNAP subunit beta'</shortName>
        <ecNumber evidence="1">2.7.7.6</ecNumber>
    </recommendedName>
    <alternativeName>
        <fullName evidence="1">RNA polymerase subunit beta'</fullName>
    </alternativeName>
    <alternativeName>
        <fullName evidence="1">Transcriptase subunit beta'</fullName>
    </alternativeName>
</protein>